<dbReference type="EMBL" id="CH408034">
    <property type="protein sequence ID" value="EAQ85063.1"/>
    <property type="molecule type" value="Genomic_DNA"/>
</dbReference>
<dbReference type="RefSeq" id="XP_001227004.1">
    <property type="nucleotide sequence ID" value="XM_001227003.1"/>
</dbReference>
<dbReference type="SMR" id="Q2GSH7"/>
<dbReference type="STRING" id="306901.Q2GSH7"/>
<dbReference type="GeneID" id="4395141"/>
<dbReference type="VEuPathDB" id="FungiDB:CHGG_09077"/>
<dbReference type="eggNOG" id="ENOG502RYQD">
    <property type="taxonomic scope" value="Eukaryota"/>
</dbReference>
<dbReference type="HOGENOM" id="CLU_621123_0_0_1"/>
<dbReference type="InParanoid" id="Q2GSH7"/>
<dbReference type="OMA" id="LADKECW"/>
<dbReference type="OrthoDB" id="3056235at2759"/>
<dbReference type="Proteomes" id="UP000001056">
    <property type="component" value="Unassembled WGS sequence"/>
</dbReference>
<dbReference type="GO" id="GO:0005737">
    <property type="term" value="C:cytoplasm"/>
    <property type="evidence" value="ECO:0007669"/>
    <property type="project" value="UniProtKB-SubCell"/>
</dbReference>
<dbReference type="GO" id="GO:0005634">
    <property type="term" value="C:nucleus"/>
    <property type="evidence" value="ECO:0007669"/>
    <property type="project" value="UniProtKB-SubCell"/>
</dbReference>
<dbReference type="GO" id="GO:0030435">
    <property type="term" value="P:sporulation resulting in formation of a cellular spore"/>
    <property type="evidence" value="ECO:0007669"/>
    <property type="project" value="UniProtKB-KW"/>
</dbReference>
<dbReference type="Gene3D" id="2.60.40.3960">
    <property type="entry name" value="Velvet domain"/>
    <property type="match status" value="1"/>
</dbReference>
<dbReference type="InterPro" id="IPR021740">
    <property type="entry name" value="Velvet"/>
</dbReference>
<dbReference type="InterPro" id="IPR037525">
    <property type="entry name" value="Velvet_dom"/>
</dbReference>
<dbReference type="InterPro" id="IPR038491">
    <property type="entry name" value="Velvet_dom_sf"/>
</dbReference>
<dbReference type="PANTHER" id="PTHR33572">
    <property type="entry name" value="SPORE DEVELOPMENT REGULATOR VOSA"/>
    <property type="match status" value="1"/>
</dbReference>
<dbReference type="PANTHER" id="PTHR33572:SF18">
    <property type="entry name" value="SPORE DEVELOPMENT REGULATOR VOSA"/>
    <property type="match status" value="1"/>
</dbReference>
<dbReference type="Pfam" id="PF11754">
    <property type="entry name" value="Velvet"/>
    <property type="match status" value="2"/>
</dbReference>
<dbReference type="PROSITE" id="PS51821">
    <property type="entry name" value="VELVET"/>
    <property type="match status" value="1"/>
</dbReference>
<gene>
    <name evidence="5" type="primary">velB</name>
    <name type="ORF">CHGG_09077</name>
</gene>
<feature type="chain" id="PRO_0000457172" description="Velvet complex subunit B">
    <location>
        <begin position="1"/>
        <end position="441"/>
    </location>
</feature>
<feature type="domain" description="Velvet" evidence="2">
    <location>
        <begin position="1"/>
        <end position="173"/>
    </location>
</feature>
<feature type="region of interest" description="Disordered" evidence="3">
    <location>
        <begin position="200"/>
        <end position="220"/>
    </location>
</feature>
<feature type="region of interest" description="Disordered" evidence="3">
    <location>
        <begin position="234"/>
        <end position="295"/>
    </location>
</feature>
<feature type="region of interest" description="Disordered" evidence="3">
    <location>
        <begin position="341"/>
        <end position="396"/>
    </location>
</feature>
<feature type="compositionally biased region" description="Low complexity" evidence="3">
    <location>
        <begin position="272"/>
        <end position="283"/>
    </location>
</feature>
<feature type="compositionally biased region" description="Low complexity" evidence="3">
    <location>
        <begin position="361"/>
        <end position="375"/>
    </location>
</feature>
<evidence type="ECO:0000250" key="1">
    <source>
        <dbReference type="UniProtKB" id="C8VTS4"/>
    </source>
</evidence>
<evidence type="ECO:0000255" key="2">
    <source>
        <dbReference type="PROSITE-ProRule" id="PRU01165"/>
    </source>
</evidence>
<evidence type="ECO:0000256" key="3">
    <source>
        <dbReference type="SAM" id="MobiDB-lite"/>
    </source>
</evidence>
<evidence type="ECO:0000269" key="4">
    <source>
    </source>
</evidence>
<evidence type="ECO:0000303" key="5">
    <source>
    </source>
</evidence>
<evidence type="ECO:0000305" key="6"/>
<accession>Q2GSH7</accession>
<comment type="function">
    <text evidence="1 4">Component of the velvet transcription factor complex that controls sexual/asexual developmental ratio in response to light, promoting sexual development in the darkness while stimulating asexual sporulation under illumination (By similarity). The velvet complex acts as a global regulator for secondary metabolite gene expression and is required for the production of chaetoglobosin A (PubMed:33766309).</text>
</comment>
<comment type="subunit">
    <text evidence="1">Component of the heterotrimeric velvet complex composed of laeA, veA and velB; VeA acting as a bridging protein between laeA and velB.</text>
</comment>
<comment type="subcellular location">
    <subcellularLocation>
        <location evidence="1">Nucleus</location>
    </subcellularLocation>
    <subcellularLocation>
        <location evidence="1">Cytoplasm</location>
    </subcellularLocation>
    <text evidence="1">VeA increases the nuclear localization of VelB.</text>
</comment>
<comment type="induction">
    <text evidence="4">Expression is negatively regulated by laeA.</text>
</comment>
<comment type="disruption phenotype">
    <text evidence="4">Results in decreased production of chaetoglobosin A.</text>
</comment>
<comment type="similarity">
    <text evidence="6">Belongs to the velvet family. VelB subfamily.</text>
</comment>
<keyword id="KW-0963">Cytoplasm</keyword>
<keyword id="KW-0539">Nucleus</keyword>
<keyword id="KW-1185">Reference proteome</keyword>
<keyword id="KW-0749">Sporulation</keyword>
<keyword id="KW-0804">Transcription</keyword>
<keyword id="KW-0805">Transcription regulation</keyword>
<protein>
    <recommendedName>
        <fullName evidence="5">Velvet complex subunit B</fullName>
    </recommendedName>
</protein>
<organism>
    <name type="scientific">Chaetomium globosum (strain ATCC 6205 / CBS 148.51 / DSM 1962 / NBRC 6347 / NRRL 1970)</name>
    <name type="common">Soil fungus</name>
    <dbReference type="NCBI Taxonomy" id="306901"/>
    <lineage>
        <taxon>Eukaryota</taxon>
        <taxon>Fungi</taxon>
        <taxon>Dikarya</taxon>
        <taxon>Ascomycota</taxon>
        <taxon>Pezizomycotina</taxon>
        <taxon>Sordariomycetes</taxon>
        <taxon>Sordariomycetidae</taxon>
        <taxon>Sordariales</taxon>
        <taxon>Chaetomiaceae</taxon>
        <taxon>Chaetomium</taxon>
    </lineage>
</organism>
<proteinExistence type="evidence at transcript level"/>
<sequence>MSTLGQGDFELAVRQQPKYACVAIERKPIDPPPIVQLMVNPRKDPGRTFLQNPYLILTARLIRKGDEDQDEQTGPKESDLTGTLVSSLYSLKDTDNSQGGFFVFGDLSVRRVGTYRLAFILYELRLAEKECWLLSRTVSDPFVVYATKTFPGLAESTFLTRSFSDQGVRLRLRKDSRTVSTKKRTISQADQIRASQGIHGYLPHDANHDLSPNGHSPHHLRRLSSLHDQAQLDRSRSYYSESPQMRPGEYTSSSYGYAPYDDQKPHKRARMDGASPDSPHPSSAGGGGGGYETDTTAYHSYAHHAHHSGPRTVPDALGSIYPLTTSGYAVAPQPALTGLPMPSPYASMPRLDTTHLPPHSPAGAPGSASSAFSPGTIGSSSRRSPPGTAGGYPSYAGHAHAGQAMFTSQPTSLPYHPAVAHGHPGAGGLGIAVGLDLDERH</sequence>
<name>VELB_CHAGB</name>
<reference key="1">
    <citation type="journal article" date="2015" name="Genome Announc.">
        <title>Draft genome sequence of the cellulolytic fungus Chaetomium globosum.</title>
        <authorList>
            <person name="Cuomo C.A."/>
            <person name="Untereiner W.A."/>
            <person name="Ma L.-J."/>
            <person name="Grabherr M."/>
            <person name="Birren B.W."/>
        </authorList>
    </citation>
    <scope>NUCLEOTIDE SEQUENCE [LARGE SCALE GENOMIC DNA]</scope>
    <source>
        <strain>ATCC 6205 / CBS 148.51 / DSM 1962 / NBRC 6347 / NRRL 1970</strain>
    </source>
</reference>
<reference key="2">
    <citation type="journal article" date="2021" name="Fungal Biol.">
        <title>Requirement of LaeA for sporulation, pigmentation and secondary metabolism in Chaetomium globosum.</title>
        <authorList>
            <person name="Cheng M."/>
            <person name="Zhao S."/>
            <person name="Lin C."/>
            <person name="Song J."/>
            <person name="Yang Q."/>
        </authorList>
    </citation>
    <scope>FUNCTION</scope>
    <scope>DISRUPTION PHENOTYPE</scope>
    <scope>INDUCTION</scope>
</reference>